<gene>
    <name type="primary">PP2AA1</name>
    <name type="synonym">EER1</name>
    <name type="synonym">RCN1</name>
    <name type="synonym">REGA</name>
    <name type="ordered locus">At1g25490</name>
    <name type="ORF">F2J7.19</name>
</gene>
<reference key="1">
    <citation type="journal article" date="1994" name="Plant Mol. Biol.">
        <title>Characterisation of cDNA and genomic clones encoding homologues of the 65 kDa regulatory subunit of protein phosphatase 2A in Arabidopsis thaliana.</title>
        <authorList>
            <person name="Slabas A.R."/>
            <person name="Fordham-Skelton A.P."/>
            <person name="Fletcher D."/>
            <person name="Martinez-Rivas J.M."/>
            <person name="Swinhoe R."/>
            <person name="Croy R.R.D."/>
            <person name="Evans I.M."/>
        </authorList>
    </citation>
    <scope>NUCLEOTIDE SEQUENCE [GENOMIC DNA]</scope>
    <source>
        <strain>cv. Landsberg erecta</strain>
        <tissue>Leaf</tissue>
    </source>
</reference>
<reference key="2">
    <citation type="journal article" date="1996" name="EMBO J.">
        <title>A mutation in protein phosphatase 2A regulatory subunit A affects auxin transport in Arabidopsis.</title>
        <authorList>
            <person name="Garbers C."/>
            <person name="DeLong A."/>
            <person name="Deruere J."/>
            <person name="Bernasconi P."/>
            <person name="Soell D."/>
        </authorList>
    </citation>
    <scope>NUCLEOTIDE SEQUENCE [MRNA]</scope>
    <scope>FUNCTION</scope>
</reference>
<reference key="3">
    <citation type="journal article" date="1996" name="Plant Mol. Biol.">
        <title>Characterization of DNA sequences encoding a novel isoform of the 55 kDa B regulatory subunit of the type 2A protein serine/threonine phosphatase of Arabidopsis thaliana.</title>
        <authorList>
            <person name="Corum J.W. III"/>
            <person name="Hartung A.J."/>
            <person name="Stamey R.T."/>
            <person name="Rundle S.J."/>
        </authorList>
    </citation>
    <scope>NUCLEOTIDE SEQUENCE [MRNA]</scope>
    <scope>TISSUE SPECIFICITY</scope>
    <source>
        <strain>cv. Columbia</strain>
    </source>
</reference>
<reference key="4">
    <citation type="journal article" date="2000" name="Nature">
        <title>Sequence and analysis of chromosome 1 of the plant Arabidopsis thaliana.</title>
        <authorList>
            <person name="Theologis A."/>
            <person name="Ecker J.R."/>
            <person name="Palm C.J."/>
            <person name="Federspiel N.A."/>
            <person name="Kaul S."/>
            <person name="White O."/>
            <person name="Alonso J."/>
            <person name="Altafi H."/>
            <person name="Araujo R."/>
            <person name="Bowman C.L."/>
            <person name="Brooks S.Y."/>
            <person name="Buehler E."/>
            <person name="Chan A."/>
            <person name="Chao Q."/>
            <person name="Chen H."/>
            <person name="Cheuk R.F."/>
            <person name="Chin C.W."/>
            <person name="Chung M.K."/>
            <person name="Conn L."/>
            <person name="Conway A.B."/>
            <person name="Conway A.R."/>
            <person name="Creasy T.H."/>
            <person name="Dewar K."/>
            <person name="Dunn P."/>
            <person name="Etgu P."/>
            <person name="Feldblyum T.V."/>
            <person name="Feng J.-D."/>
            <person name="Fong B."/>
            <person name="Fujii C.Y."/>
            <person name="Gill J.E."/>
            <person name="Goldsmith A.D."/>
            <person name="Haas B."/>
            <person name="Hansen N.F."/>
            <person name="Hughes B."/>
            <person name="Huizar L."/>
            <person name="Hunter J.L."/>
            <person name="Jenkins J."/>
            <person name="Johnson-Hopson C."/>
            <person name="Khan S."/>
            <person name="Khaykin E."/>
            <person name="Kim C.J."/>
            <person name="Koo H.L."/>
            <person name="Kremenetskaia I."/>
            <person name="Kurtz D.B."/>
            <person name="Kwan A."/>
            <person name="Lam B."/>
            <person name="Langin-Hooper S."/>
            <person name="Lee A."/>
            <person name="Lee J.M."/>
            <person name="Lenz C.A."/>
            <person name="Li J.H."/>
            <person name="Li Y.-P."/>
            <person name="Lin X."/>
            <person name="Liu S.X."/>
            <person name="Liu Z.A."/>
            <person name="Luros J.S."/>
            <person name="Maiti R."/>
            <person name="Marziali A."/>
            <person name="Militscher J."/>
            <person name="Miranda M."/>
            <person name="Nguyen M."/>
            <person name="Nierman W.C."/>
            <person name="Osborne B.I."/>
            <person name="Pai G."/>
            <person name="Peterson J."/>
            <person name="Pham P.K."/>
            <person name="Rizzo M."/>
            <person name="Rooney T."/>
            <person name="Rowley D."/>
            <person name="Sakano H."/>
            <person name="Salzberg S.L."/>
            <person name="Schwartz J.R."/>
            <person name="Shinn P."/>
            <person name="Southwick A.M."/>
            <person name="Sun H."/>
            <person name="Tallon L.J."/>
            <person name="Tambunga G."/>
            <person name="Toriumi M.J."/>
            <person name="Town C.D."/>
            <person name="Utterback T."/>
            <person name="Van Aken S."/>
            <person name="Vaysberg M."/>
            <person name="Vysotskaia V.S."/>
            <person name="Walker M."/>
            <person name="Wu D."/>
            <person name="Yu G."/>
            <person name="Fraser C.M."/>
            <person name="Venter J.C."/>
            <person name="Davis R.W."/>
        </authorList>
    </citation>
    <scope>NUCLEOTIDE SEQUENCE [LARGE SCALE GENOMIC DNA]</scope>
    <source>
        <strain>cv. Columbia</strain>
    </source>
</reference>
<reference key="5">
    <citation type="journal article" date="2017" name="Plant J.">
        <title>Araport11: a complete reannotation of the Arabidopsis thaliana reference genome.</title>
        <authorList>
            <person name="Cheng C.Y."/>
            <person name="Krishnakumar V."/>
            <person name="Chan A.P."/>
            <person name="Thibaud-Nissen F."/>
            <person name="Schobel S."/>
            <person name="Town C.D."/>
        </authorList>
    </citation>
    <scope>GENOME REANNOTATION</scope>
    <source>
        <strain>cv. Columbia</strain>
    </source>
</reference>
<reference key="6">
    <citation type="journal article" date="2003" name="Science">
        <title>Empirical analysis of transcriptional activity in the Arabidopsis genome.</title>
        <authorList>
            <person name="Yamada K."/>
            <person name="Lim J."/>
            <person name="Dale J.M."/>
            <person name="Chen H."/>
            <person name="Shinn P."/>
            <person name="Palm C.J."/>
            <person name="Southwick A.M."/>
            <person name="Wu H.C."/>
            <person name="Kim C.J."/>
            <person name="Nguyen M."/>
            <person name="Pham P.K."/>
            <person name="Cheuk R.F."/>
            <person name="Karlin-Newmann G."/>
            <person name="Liu S.X."/>
            <person name="Lam B."/>
            <person name="Sakano H."/>
            <person name="Wu T."/>
            <person name="Yu G."/>
            <person name="Miranda M."/>
            <person name="Quach H.L."/>
            <person name="Tripp M."/>
            <person name="Chang C.H."/>
            <person name="Lee J.M."/>
            <person name="Toriumi M.J."/>
            <person name="Chan M.M."/>
            <person name="Tang C.C."/>
            <person name="Onodera C.S."/>
            <person name="Deng J.M."/>
            <person name="Akiyama K."/>
            <person name="Ansari Y."/>
            <person name="Arakawa T."/>
            <person name="Banh J."/>
            <person name="Banno F."/>
            <person name="Bowser L."/>
            <person name="Brooks S.Y."/>
            <person name="Carninci P."/>
            <person name="Chao Q."/>
            <person name="Choy N."/>
            <person name="Enju A."/>
            <person name="Goldsmith A.D."/>
            <person name="Gurjal M."/>
            <person name="Hansen N.F."/>
            <person name="Hayashizaki Y."/>
            <person name="Johnson-Hopson C."/>
            <person name="Hsuan V.W."/>
            <person name="Iida K."/>
            <person name="Karnes M."/>
            <person name="Khan S."/>
            <person name="Koesema E."/>
            <person name="Ishida J."/>
            <person name="Jiang P.X."/>
            <person name="Jones T."/>
            <person name="Kawai J."/>
            <person name="Kamiya A."/>
            <person name="Meyers C."/>
            <person name="Nakajima M."/>
            <person name="Narusaka M."/>
            <person name="Seki M."/>
            <person name="Sakurai T."/>
            <person name="Satou M."/>
            <person name="Tamse R."/>
            <person name="Vaysberg M."/>
            <person name="Wallender E.K."/>
            <person name="Wong C."/>
            <person name="Yamamura Y."/>
            <person name="Yuan S."/>
            <person name="Shinozaki K."/>
            <person name="Davis R.W."/>
            <person name="Theologis A."/>
            <person name="Ecker J.R."/>
        </authorList>
    </citation>
    <scope>NUCLEOTIDE SEQUENCE [LARGE SCALE MRNA]</scope>
    <source>
        <strain>cv. Columbia</strain>
    </source>
</reference>
<reference key="7">
    <citation type="submission" date="2005-03" db="EMBL/GenBank/DDBJ databases">
        <title>Large-scale analysis of RIKEN Arabidopsis full-length (RAFL) cDNAs.</title>
        <authorList>
            <person name="Totoki Y."/>
            <person name="Seki M."/>
            <person name="Ishida J."/>
            <person name="Nakajima M."/>
            <person name="Enju A."/>
            <person name="Kamiya A."/>
            <person name="Narusaka M."/>
            <person name="Shin-i T."/>
            <person name="Nakagawa M."/>
            <person name="Sakamoto N."/>
            <person name="Oishi K."/>
            <person name="Kohara Y."/>
            <person name="Kobayashi M."/>
            <person name="Toyoda A."/>
            <person name="Sakaki Y."/>
            <person name="Sakurai T."/>
            <person name="Iida K."/>
            <person name="Akiyama K."/>
            <person name="Satou M."/>
            <person name="Toyoda T."/>
            <person name="Konagaya A."/>
            <person name="Carninci P."/>
            <person name="Kawai J."/>
            <person name="Hayashizaki Y."/>
            <person name="Shinozaki K."/>
        </authorList>
    </citation>
    <scope>NUCLEOTIDE SEQUENCE [LARGE SCALE MRNA] OF 265-588</scope>
    <source>
        <strain>cv. Columbia</strain>
    </source>
</reference>
<reference key="8">
    <citation type="journal article" date="1999" name="Eur. J. Biochem.">
        <title>Molecular characterization of the B' regulatory subunit gene family of Arabidopsis protein phosphatase 2A.</title>
        <authorList>
            <person name="Haynes J.G."/>
            <person name="Hartung A.J."/>
            <person name="Hendershot J.D. III"/>
            <person name="Passingham R.S."/>
            <person name="Rundle S.J."/>
        </authorList>
    </citation>
    <scope>INTERACTION WITH PP2A SUBUNITS B AND C</scope>
</reference>
<reference key="9">
    <citation type="journal article" date="1999" name="Mol. Gen. Genet.">
        <title>Mutations in a new Arabidopsis cyclophilin disrupt its interaction with protein phosphatase 2A.</title>
        <authorList>
            <person name="Jackson K."/>
            <person name="Soell D."/>
        </authorList>
    </citation>
    <scope>INTERACTION WITH CYP20-1/ROC7</scope>
</reference>
<reference key="10">
    <citation type="journal article" date="1999" name="Plant J.">
        <title>The RCN1-encoded A subunit of protein phosphatase 2A increases phosphatase activity in vivo.</title>
        <authorList>
            <person name="Deruere J."/>
            <person name="Jackson K."/>
            <person name="Garbers C."/>
            <person name="Soell D."/>
            <person name="Delong A."/>
        </authorList>
    </citation>
    <scope>FUNCTION</scope>
    <scope>TISSUE SPECIFICITY</scope>
</reference>
<reference key="11">
    <citation type="journal article" date="2001" name="Plant Cell">
        <title>Genetic and chemical reductions in protein phosphatase activity alter auxin transport, gravity response, and lateral root growth.</title>
        <authorList>
            <person name="Rashotte A.M."/>
            <person name="DeLong A."/>
            <person name="Muday G.K."/>
        </authorList>
    </citation>
    <scope>FUNCTION</scope>
</reference>
<reference key="12">
    <citation type="journal article" date="2001" name="Plant Physiol.">
        <title>The Arabidopsis eer1 mutant has enhanced ethylene responses in the hypocotyl and stem.</title>
        <authorList>
            <person name="Larsen P.B."/>
            <person name="Chang C."/>
        </authorList>
    </citation>
    <scope>FUNCTION</scope>
</reference>
<reference key="13">
    <citation type="journal article" date="2002" name="Plant Cell">
        <title>The Arabidopsis TONNEAU2 gene encodes a putative novel protein phosphatase 2A regulatory subunit essential for the control of the cortical cytoskeleton.</title>
        <authorList>
            <person name="Camilleri C."/>
            <person name="Azimzadeh J."/>
            <person name="Pastuglia M."/>
            <person name="Bellini C."/>
            <person name="Grandjean O."/>
            <person name="Bouchez D."/>
        </authorList>
    </citation>
    <scope>INTERACTION WITH TON2</scope>
    <source>
        <strain>cv. Columbia</strain>
    </source>
</reference>
<reference key="14">
    <citation type="journal article" date="2002" name="Plant Cell">
        <title>Disruption of a guard cell-expressed protein phosphatase 2A regulatory subunit, RCN1, confers abscisic acid insensitivity in Arabidopsis.</title>
        <authorList>
            <person name="Kwak J.M."/>
            <person name="Moon J.-H."/>
            <person name="Murata Y."/>
            <person name="Kuchitsu K."/>
            <person name="Leonhardt N."/>
            <person name="DeLong A."/>
            <person name="Schroeder J.I."/>
        </authorList>
    </citation>
    <scope>FUNCTION</scope>
</reference>
<reference key="15">
    <citation type="journal article" date="2003" name="Plant J.">
        <title>Enhanced ethylene responsiveness in the Arabidopsis eer1 mutant results from a loss-of-function mutation in the protein phosphatase 2A A regulatory subunit, RCN1.</title>
        <authorList>
            <person name="Larsen P.B."/>
            <person name="Cancel J.D."/>
        </authorList>
    </citation>
    <scope>FUNCTION</scope>
</reference>
<reference key="16">
    <citation type="journal article" date="2004" name="Plant Cell">
        <title>Disparate roles for the regulatory A subunit isoforms in Arabidopsis protein phosphatase 2A.</title>
        <authorList>
            <person name="Zhou H.-W."/>
            <person name="Nussbaumer C."/>
            <person name="Chao Y."/>
            <person name="DeLong A."/>
        </authorList>
    </citation>
    <scope>FUNCTION</scope>
    <scope>TISSUE SPECIFICITY</scope>
</reference>
<reference key="17">
    <citation type="journal article" date="2004" name="Plant J.">
        <title>Isolation and identification of phosphatidic acid targets from plants.</title>
        <authorList>
            <person name="Testerink C."/>
            <person name="Dekker H.L."/>
            <person name="Lim Z.-Y."/>
            <person name="Johns M.K."/>
            <person name="Holmes A.B."/>
            <person name="De Koster C.G."/>
            <person name="Ktistakis N.T."/>
            <person name="Munnik T."/>
        </authorList>
    </citation>
    <scope>INTERACTION WITH PHOSPHATIDIC ACID</scope>
</reference>
<reference key="18">
    <citation type="journal article" date="2006" name="Plant J.">
        <title>AtCHIP functions as an E3 ubiquitin ligase of protein phosphatase 2A subunits and alters plant response to abscisic acid treatment.</title>
        <authorList>
            <person name="Luo J."/>
            <person name="Shen G."/>
            <person name="Yan J."/>
            <person name="He C."/>
            <person name="Zhang H."/>
        </authorList>
    </citation>
    <scope>INTERACTION WITH CHIP</scope>
    <scope>PTM</scope>
</reference>
<reference key="19">
    <citation type="journal article" date="2011" name="Plant Cell">
        <title>Multilevel control of Arabidopsis 3-hydroxy-3-methylglutaryl coenzyme A reductase by protein phosphatase 2A.</title>
        <authorList>
            <person name="Leivar P."/>
            <person name="Antolin-Llovera M."/>
            <person name="Ferrero S."/>
            <person name="Closa M."/>
            <person name="Arro M."/>
            <person name="Ferrer A."/>
            <person name="Boronat A."/>
            <person name="Campos N."/>
        </authorList>
    </citation>
    <scope>INTERACTION WITH B''ALPHA AND B''BETA</scope>
</reference>
<reference key="20">
    <citation type="journal article" date="2012" name="Plant J.">
        <title>Arabidopsis thaliana histone deacetylase 14 (HDA14) is an alpha-tubulin deacetylase that associates with PP2A and enriches in the microtubule fraction with the putative histone acetyltransferase ELP3.</title>
        <authorList>
            <person name="Tran H.T."/>
            <person name="Nimick M."/>
            <person name="Uhrig R.G."/>
            <person name="Templeton G."/>
            <person name="Morrice N."/>
            <person name="Gourlay R."/>
            <person name="DeLong A."/>
            <person name="Moorhead G.B."/>
        </authorList>
    </citation>
    <scope>SUBCELLULAR LOCATION</scope>
</reference>
<reference key="21">
    <citation type="journal article" date="2014" name="EMBO J.">
        <title>Negative control of BAK1 by protein phosphatase 2A during plant innate immunity.</title>
        <authorList>
            <person name="Segonzac C."/>
            <person name="Macho A.P."/>
            <person name="Sanmartin M."/>
            <person name="Ntoukakis V."/>
            <person name="Sanchez-Serrano J.J."/>
            <person name="Zipfel C."/>
        </authorList>
    </citation>
    <scope>FUNCTION</scope>
</reference>
<reference key="22">
    <citation type="journal article" date="2016" name="Proc. Natl. Acad. Sci. U.S.A.">
        <title>ROTUNDA3 function in plant development by phosphatase 2A-mediated regulation of auxin transporter recycling.</title>
        <authorList>
            <person name="Karampelias M."/>
            <person name="Neyt P."/>
            <person name="De Groeve S."/>
            <person name="Aesaert S."/>
            <person name="Coussens G."/>
            <person name="Rolcik J."/>
            <person name="Bruno L."/>
            <person name="De Winne N."/>
            <person name="Van Minnebruggen A."/>
            <person name="Van Montagu M."/>
            <person name="Ponce M.R."/>
            <person name="Micol J.L."/>
            <person name="Friml J."/>
            <person name="De Jaeger G."/>
            <person name="Van Lijsebettens M."/>
        </authorList>
    </citation>
    <scope>INTERACTION WITH SIC/RON3</scope>
    <source>
        <strain>cv. Columbia</strain>
        <strain>cv. Landsberg erecta</strain>
    </source>
</reference>
<protein>
    <recommendedName>
        <fullName>Serine/threonine-protein phosphatase 2A 65 kDa regulatory subunit A alpha isoform</fullName>
        <shortName>AtA alpha</shortName>
        <shortName>PP2A, subunit A, alpha isoform</shortName>
        <shortName>PR-65 A</shortName>
    </recommendedName>
    <alternativeName>
        <fullName>Protein ROOTS CURL IN NAPHTHYLPHTHALAMIC ACID 1</fullName>
    </alternativeName>
    <alternativeName>
        <fullName>Protein enhancer of ethylene-response 1</fullName>
    </alternativeName>
</protein>
<accession>Q38845</accession>
<accession>Q38855</accession>
<accession>Q38952</accession>
<accession>Q56WI3</accession>
<accession>Q570B7</accession>
<proteinExistence type="evidence at protein level"/>
<feature type="chain" id="PRO_0000071409" description="Serine/threonine-protein phosphatase 2A 65 kDa regulatory subunit A alpha isoform">
    <location>
        <begin position="1"/>
        <end position="588"/>
    </location>
</feature>
<feature type="repeat" description="HEAT 1">
    <location>
        <begin position="2"/>
        <end position="42"/>
    </location>
</feature>
<feature type="repeat" description="HEAT 2">
    <location>
        <begin position="44"/>
        <end position="80"/>
    </location>
</feature>
<feature type="repeat" description="HEAT 3">
    <location>
        <begin position="81"/>
        <end position="119"/>
    </location>
</feature>
<feature type="repeat" description="HEAT 4">
    <location>
        <begin position="158"/>
        <end position="196"/>
    </location>
</feature>
<feature type="repeat" description="HEAT 5">
    <location>
        <begin position="197"/>
        <end position="235"/>
    </location>
</feature>
<feature type="repeat" description="HEAT 6">
    <location>
        <begin position="236"/>
        <end position="274"/>
    </location>
</feature>
<feature type="repeat" description="HEAT 7">
    <location>
        <begin position="275"/>
        <end position="313"/>
    </location>
</feature>
<feature type="repeat" description="HEAT 8">
    <location>
        <begin position="315"/>
        <end position="352"/>
    </location>
</feature>
<feature type="repeat" description="HEAT 9">
    <location>
        <begin position="353"/>
        <end position="391"/>
    </location>
</feature>
<feature type="repeat" description="HEAT 10">
    <location>
        <begin position="393"/>
        <end position="430"/>
    </location>
</feature>
<feature type="repeat" description="HEAT 11">
    <location>
        <begin position="432"/>
        <end position="469"/>
    </location>
</feature>
<feature type="repeat" description="HEAT 12">
    <location>
        <begin position="470"/>
        <end position="508"/>
    </location>
</feature>
<feature type="repeat" description="HEAT 13">
    <location>
        <begin position="509"/>
        <end position="547"/>
    </location>
</feature>
<feature type="repeat" description="HEAT 14">
    <location>
        <begin position="549"/>
        <end position="586"/>
    </location>
</feature>
<feature type="sequence conflict" description="In Ref. 1; CAA57527." evidence="20" ref="1">
    <original>E</original>
    <variation>G</variation>
    <location>
        <position position="104"/>
    </location>
</feature>
<feature type="sequence conflict" description="In Ref. 1; CAA57527." evidence="20" ref="1">
    <original>E</original>
    <variation>K</variation>
    <location>
        <position position="270"/>
    </location>
</feature>
<feature type="sequence conflict" description="In Ref. 1; CAA57527." evidence="20" ref="1">
    <original>D</original>
    <variation>Y</variation>
    <location>
        <position position="435"/>
    </location>
</feature>
<feature type="sequence conflict" description="In Ref. 1; CAA57527 and 3; AAB60713." evidence="20" ref="1 3">
    <original>A</original>
    <variation>AAA</variation>
    <location>
        <position position="457"/>
    </location>
</feature>
<keyword id="KW-0938">Abscisic acid signaling pathway</keyword>
<keyword id="KW-0927">Auxin signaling pathway</keyword>
<keyword id="KW-0963">Cytoplasm</keyword>
<keyword id="KW-0936">Ethylene signaling pathway</keyword>
<keyword id="KW-0539">Nucleus</keyword>
<keyword id="KW-0611">Plant defense</keyword>
<keyword id="KW-1185">Reference proteome</keyword>
<keyword id="KW-0677">Repeat</keyword>
<keyword id="KW-0832">Ubl conjugation</keyword>
<evidence type="ECO:0000250" key="1"/>
<evidence type="ECO:0000250" key="2">
    <source>
        <dbReference type="UniProtKB" id="P62714"/>
    </source>
</evidence>
<evidence type="ECO:0000269" key="3">
    <source>
    </source>
</evidence>
<evidence type="ECO:0000269" key="4">
    <source>
    </source>
</evidence>
<evidence type="ECO:0000269" key="5">
    <source>
    </source>
</evidence>
<evidence type="ECO:0000269" key="6">
    <source>
    </source>
</evidence>
<evidence type="ECO:0000269" key="7">
    <source>
    </source>
</evidence>
<evidence type="ECO:0000269" key="8">
    <source>
    </source>
</evidence>
<evidence type="ECO:0000269" key="9">
    <source>
    </source>
</evidence>
<evidence type="ECO:0000269" key="10">
    <source>
    </source>
</evidence>
<evidence type="ECO:0000269" key="11">
    <source>
    </source>
</evidence>
<evidence type="ECO:0000269" key="12">
    <source>
    </source>
</evidence>
<evidence type="ECO:0000269" key="13">
    <source>
    </source>
</evidence>
<evidence type="ECO:0000269" key="14">
    <source>
    </source>
</evidence>
<evidence type="ECO:0000269" key="15">
    <source>
    </source>
</evidence>
<evidence type="ECO:0000269" key="16">
    <source>
    </source>
</evidence>
<evidence type="ECO:0000269" key="17">
    <source>
    </source>
</evidence>
<evidence type="ECO:0000269" key="18">
    <source>
    </source>
</evidence>
<evidence type="ECO:0000269" key="19">
    <source>
    </source>
</evidence>
<evidence type="ECO:0000305" key="20"/>
<sequence>MAMVDEPLYPIAVLIDELKNDDIQLRLNSIRRLSTIARALGEERTRKELIPFLSENSDDDDEVLLAMAEELGVFIPFVGGIEFAHVLLPPLESLCTVEETCVREKAVESLCKIGSQMKENDLVESFVPLVKRLAGGEWFAARVSACGIFHVAYQGCTDVLKTELRATYSQLCKDDMPMVRRAAASNLGKFATTVESTFLIAEIMTMFDDLTKDDQDSVRLLAVEGCAALGKLLEPQDCVARILPVIVNFSQDKSWRVRYMVANQLYELCEAVGPDCTRTDLVPAYVRLLRDNEAEVRIAAAGKVTKFCRLLNPELAIQHILPCVKELSSDSSQHVRSALASVIMGMAPILGKDSTIEHLLPIFLSLLKDEFPDVRLNIISKLDQVNQVIGIDLLSQSLLPAIVELAEDRHWRVRLAIIEYVPLLASQLGIGFFDDKLGALCMQWLQDKVYSIREAAANNLKRLAEEFGPEWAMQHLVPQVLDMVNNPHYLHRMMVLRAISLMAPVMGSEITCSKFLPVVVEASKDRVPNIKFNVAKLLQSLIPIVDQSVVDKTIRQCLVDLSEDPDVDVRYFANQALNSIDGSTAAQS</sequence>
<name>2AAA_ARATH</name>
<comment type="function">
    <text evidence="4 6 7 9 10 11 16 18">The A subunit of protein phosphatase 2A serves as a scaffolding molecule to coordinate the assembly of the catalytic subunit and a variable regulatory B subunit. Seems to act as a positive regulator of PP2A catalytic activity. Confers resistance to phosphatase inhibitors such as okadaic acid and cantharidin. Involved during developmental process such as seedling and floral developments, root gravitropism, and stomatal opening regulation. Involved in the regulation of auxin efflux, especially during basipetal (tips to base) auxin transport in roots, and appears to contribute to the perception of auxin efflux inhibitors such as 1-N-naphthylphthalamic acid (NPA) and to semicarbazone I (substituted phenylsemicarbazone of 2-acetylarylcarboxylic acids) (SCB-I). Modulates the magnitude of ethylene response in the hypocotyl and stem, and functions as a general positive transducer of early ABA signaling. The holoenzyme composed of PP2AA1, PP2A4 and B'ZETA or B'ETA acts as a negative regulator of plant innate immunity by controlling BAK1 phosphorylation state and activation in surface-localized immune receptor complexes (PubMed:25085430).</text>
</comment>
<comment type="subunit">
    <text evidence="2 3 5 8 12 13 14 17">PP2A consists of a common heterodimeric core enzyme, composed of a 36 kDa catalytic subunit (subunit C) and a 65 kDa constant regulatory subunit (subunit A), that associates with a variety of regulatory subunits such as subunits B (the R2/B/PR55/B55, R3/B''/PR72/PR130/PR59 and R5/B'/B56 families) and the regulatory subunits TON2. Interacts with CYP20-1/ROC7. Also interacts with phosphatidic acid (PA), a lipid signaling molecule. Interacts with CHIP. Interacts with SIC/RON3 (PubMed:26888284).</text>
</comment>
<comment type="interaction">
    <interactant intactId="EBI-1645478">
        <id>Q38845</id>
    </interactant>
    <interactant intactId="EBI-1778843">
        <id>Q9S7Z2</id>
        <label>AFP4</label>
    </interactant>
    <organismsDiffer>false</organismsDiffer>
    <experiments>3</experiments>
</comment>
<comment type="interaction">
    <interactant intactId="EBI-1645478">
        <id>Q38845</id>
    </interactant>
    <interactant intactId="EBI-2363348">
        <id>Q9FLI3</id>
        <label>AHG1</label>
    </interactant>
    <organismsDiffer>false</organismsDiffer>
    <experiments>3</experiments>
</comment>
<comment type="interaction">
    <interactant intactId="EBI-1645478">
        <id>Q38845</id>
    </interactant>
    <interactant intactId="EBI-763232">
        <id>O80931</id>
        <label>AS1</label>
    </interactant>
    <organismsDiffer>false</organismsDiffer>
    <experiments>3</experiments>
</comment>
<comment type="interaction">
    <interactant intactId="EBI-1645478">
        <id>Q38845</id>
    </interactant>
    <interactant intactId="EBI-4425726">
        <id>Q8VZE5</id>
        <label>At1g05410</label>
    </interactant>
    <organismsDiffer>false</organismsDiffer>
    <experiments>3</experiments>
</comment>
<comment type="interaction">
    <interactant intactId="EBI-1645478">
        <id>Q38845</id>
    </interactant>
    <interactant intactId="EBI-25521101">
        <id>F4I9J8</id>
        <label>At1g51520</label>
    </interactant>
    <organismsDiffer>false</organismsDiffer>
    <experiments>3</experiments>
</comment>
<comment type="interaction">
    <interactant intactId="EBI-1645478">
        <id>Q38845</id>
    </interactant>
    <interactant intactId="EBI-4456633">
        <id>Q9SJ60</id>
        <label>At2g35900</label>
    </interactant>
    <organismsDiffer>false</organismsDiffer>
    <experiments>3</experiments>
</comment>
<comment type="interaction">
    <interactant intactId="EBI-1645478">
        <id>Q38845</id>
    </interactant>
    <interactant intactId="EBI-1238139">
        <id>Q9LYL6</id>
        <label>At3g56270</label>
    </interactant>
    <organismsDiffer>false</organismsDiffer>
    <experiments>3</experiments>
</comment>
<comment type="interaction">
    <interactant intactId="EBI-1645478">
        <id>Q38845</id>
    </interactant>
    <interactant intactId="EBI-25517258">
        <id>A0A384L7B9</id>
        <label>At3g62550</label>
    </interactant>
    <organismsDiffer>false</organismsDiffer>
    <experiments>3</experiments>
</comment>
<comment type="interaction">
    <interactant intactId="EBI-1645478">
        <id>Q38845</id>
    </interactant>
    <interactant intactId="EBI-25521064">
        <id>A0A178U8H4</id>
        <label>AXX17_At5g17430</label>
    </interactant>
    <organismsDiffer>false</organismsDiffer>
    <experiments>3</experiments>
</comment>
<comment type="interaction">
    <interactant intactId="EBI-1645478">
        <id>Q38845</id>
    </interactant>
    <interactant intactId="EBI-4440101">
        <id>Q8GZ13</id>
        <label>BEE1</label>
    </interactant>
    <organismsDiffer>false</organismsDiffer>
    <experiments>3</experiments>
</comment>
<comment type="interaction">
    <interactant intactId="EBI-1645478">
        <id>Q38845</id>
    </interactant>
    <interactant intactId="EBI-4424312">
        <id>Q93VJ4</id>
        <label>BEE2</label>
    </interactant>
    <organismsDiffer>false</organismsDiffer>
    <experiments>3</experiments>
</comment>
<comment type="interaction">
    <interactant intactId="EBI-1645478">
        <id>Q38845</id>
    </interactant>
    <interactant intactId="EBI-617095">
        <id>Q9LEZ3</id>
        <label>BIM1</label>
    </interactant>
    <organismsDiffer>false</organismsDiffer>
    <experiments>3</experiments>
</comment>
<comment type="interaction">
    <interactant intactId="EBI-1645478">
        <id>Q38845</id>
    </interactant>
    <interactant intactId="EBI-1573415">
        <id>Q9SEZ7</id>
        <label>CIPK16</label>
    </interactant>
    <organismsDiffer>false</organismsDiffer>
    <experiments>3</experiments>
</comment>
<comment type="interaction">
    <interactant intactId="EBI-1645478">
        <id>Q38845</id>
    </interactant>
    <interactant intactId="EBI-16967606">
        <id>Q9FJ55</id>
        <label>CIPK19</label>
    </interactant>
    <organismsDiffer>false</organismsDiffer>
    <experiments>3</experiments>
</comment>
<comment type="interaction">
    <interactant intactId="EBI-1645478">
        <id>Q38845</id>
    </interactant>
    <interactant intactId="EBI-1748724">
        <id>Q2V452</id>
        <label>CIPK3</label>
    </interactant>
    <organismsDiffer>false</organismsDiffer>
    <experiments>3</experiments>
</comment>
<comment type="interaction">
    <interactant intactId="EBI-1645478">
        <id>Q38845</id>
    </interactant>
    <interactant intactId="EBI-1390454">
        <id>Q9SU72</id>
        <label>EDS1</label>
    </interactant>
    <organismsDiffer>false</organismsDiffer>
    <experiments>3</experiments>
</comment>
<comment type="interaction">
    <interactant intactId="EBI-1645478">
        <id>Q38845</id>
    </interactant>
    <interactant intactId="EBI-2000137">
        <id>Q9MAI5</id>
        <label>ERF8</label>
    </interactant>
    <organismsDiffer>false</organismsDiffer>
    <experiments>3</experiments>
</comment>
<comment type="interaction">
    <interactant intactId="EBI-1645478">
        <id>Q38845</id>
    </interactant>
    <interactant intactId="EBI-25521209">
        <id>Q9C920</id>
        <label>KDSB</label>
    </interactant>
    <organismsDiffer>false</organismsDiffer>
    <experiments>3</experiments>
</comment>
<comment type="interaction">
    <interactant intactId="EBI-1645478">
        <id>Q38845</id>
    </interactant>
    <interactant intactId="EBI-4449491">
        <id>Q9C5J9</id>
        <label>LIP1</label>
    </interactant>
    <organismsDiffer>false</organismsDiffer>
    <experiments>4</experiments>
</comment>
<comment type="interaction">
    <interactant intactId="EBI-1645478">
        <id>Q38845</id>
    </interactant>
    <interactant intactId="EBI-4434198">
        <id>Q8LFL8</id>
        <label>LSM1B</label>
    </interactant>
    <organismsDiffer>false</organismsDiffer>
    <experiments>3</experiments>
</comment>
<comment type="interaction">
    <interactant intactId="EBI-1645478">
        <id>Q38845</id>
    </interactant>
    <interactant intactId="EBI-4424647">
        <id>Q9LPZ1</id>
        <label>MORF9</label>
    </interactant>
    <organismsDiffer>false</organismsDiffer>
    <experiments>3</experiments>
</comment>
<comment type="interaction">
    <interactant intactId="EBI-1645478">
        <id>Q38845</id>
    </interactant>
    <interactant intactId="EBI-25517523">
        <id>A0A1P8BA81</id>
        <label>MTI20.21</label>
    </interactant>
    <organismsDiffer>false</organismsDiffer>
    <experiments>3</experiments>
</comment>
<comment type="interaction">
    <interactant intactId="EBI-1645478">
        <id>Q38845</id>
    </interactant>
    <interactant intactId="EBI-16967096">
        <id>Q8H133</id>
        <label>PLP8</label>
    </interactant>
    <organismsDiffer>false</organismsDiffer>
    <experiments>3</experiments>
</comment>
<comment type="interaction">
    <interactant intactId="EBI-1645478">
        <id>Q38845</id>
    </interactant>
    <interactant intactId="EBI-2363192">
        <id>Q8S8E3</id>
        <label>PYL6</label>
    </interactant>
    <organismsDiffer>false</organismsDiffer>
    <experiments>3</experiments>
</comment>
<comment type="interaction">
    <interactant intactId="EBI-1645478">
        <id>Q38845</id>
    </interactant>
    <interactant intactId="EBI-2349513">
        <id>Q84MC7</id>
        <label>PYL9</label>
    </interactant>
    <organismsDiffer>false</organismsDiffer>
    <experiments>3</experiments>
</comment>
<comment type="interaction">
    <interactant intactId="EBI-1645478">
        <id>Q38845</id>
    </interactant>
    <interactant intactId="EBI-4470690">
        <id>Q93ZX1</id>
        <label>RFC4</label>
    </interactant>
    <organismsDiffer>false</organismsDiffer>
    <experiments>3</experiments>
</comment>
<comment type="subcellular location">
    <subcellularLocation>
        <location evidence="15">Cytoplasm</location>
        <location evidence="15">Cytosol</location>
    </subcellularLocation>
    <subcellularLocation>
        <location evidence="15">Nucleus</location>
    </subcellularLocation>
</comment>
<comment type="tissue specificity">
    <text evidence="4 11 19">Mostly expressed in cell-dividing tissues such as apical meristems. Ubiquitous, with higher levels in roots and flowers (at protein level).</text>
</comment>
<comment type="domain">
    <text evidence="1">Each HEAT repeat appears to consist of two alpha helices joined by a hydrophilic region, the intrarepeat loop. The repeat units may be arranged laterally to form a rod-like structure (By similarity).</text>
</comment>
<comment type="PTM">
    <text>Ubiquitinated. CHIP-mediated ubiquitination enhances phosphatase activity after an abiotic stress such as low temperature or darkness.</text>
</comment>
<comment type="similarity">
    <text evidence="20">Belongs to the phosphatase 2A regulatory subunit A family.</text>
</comment>
<dbReference type="EMBL" id="X82001">
    <property type="protein sequence ID" value="CAA57527.1"/>
    <property type="molecule type" value="Genomic_DNA"/>
</dbReference>
<dbReference type="EMBL" id="U21557">
    <property type="protein sequence ID" value="AAC49255.1"/>
    <property type="molecule type" value="mRNA"/>
</dbReference>
<dbReference type="EMBL" id="U27299">
    <property type="protein sequence ID" value="AAB60713.1"/>
    <property type="molecule type" value="mRNA"/>
</dbReference>
<dbReference type="EMBL" id="AC079281">
    <property type="protein sequence ID" value="AAG50801.1"/>
    <property type="molecule type" value="Genomic_DNA"/>
</dbReference>
<dbReference type="EMBL" id="CP002684">
    <property type="protein sequence ID" value="AEE30632.1"/>
    <property type="molecule type" value="Genomic_DNA"/>
</dbReference>
<dbReference type="EMBL" id="AY120757">
    <property type="protein sequence ID" value="AAM53315.1"/>
    <property type="molecule type" value="mRNA"/>
</dbReference>
<dbReference type="EMBL" id="BT000108">
    <property type="protein sequence ID" value="AAN15427.1"/>
    <property type="molecule type" value="mRNA"/>
</dbReference>
<dbReference type="EMBL" id="AK220793">
    <property type="protein sequence ID" value="BAD94039.1"/>
    <property type="molecule type" value="mRNA"/>
</dbReference>
<dbReference type="EMBL" id="AK222057">
    <property type="protein sequence ID" value="BAD94840.1"/>
    <property type="molecule type" value="mRNA"/>
</dbReference>
<dbReference type="PIR" id="B86385">
    <property type="entry name" value="B86385"/>
</dbReference>
<dbReference type="PIR" id="S51807">
    <property type="entry name" value="S51807"/>
</dbReference>
<dbReference type="PIR" id="S69215">
    <property type="entry name" value="S69215"/>
</dbReference>
<dbReference type="RefSeq" id="NP_173920.1">
    <property type="nucleotide sequence ID" value="NM_102360.4"/>
</dbReference>
<dbReference type="SMR" id="Q38845"/>
<dbReference type="BioGRID" id="24372">
    <property type="interactions" value="106"/>
</dbReference>
<dbReference type="FunCoup" id="Q38845">
    <property type="interactions" value="790"/>
</dbReference>
<dbReference type="IntAct" id="Q38845">
    <property type="interactions" value="61"/>
</dbReference>
<dbReference type="STRING" id="3702.Q38845"/>
<dbReference type="iPTMnet" id="Q38845"/>
<dbReference type="PaxDb" id="3702-AT1G25490.1"/>
<dbReference type="ProteomicsDB" id="245086"/>
<dbReference type="EnsemblPlants" id="AT1G25490.1">
    <property type="protein sequence ID" value="AT1G25490.1"/>
    <property type="gene ID" value="AT1G25490"/>
</dbReference>
<dbReference type="GeneID" id="839135"/>
<dbReference type="Gramene" id="AT1G25490.1">
    <property type="protein sequence ID" value="AT1G25490.1"/>
    <property type="gene ID" value="AT1G25490"/>
</dbReference>
<dbReference type="KEGG" id="ath:AT1G25490"/>
<dbReference type="Araport" id="AT1G25490"/>
<dbReference type="TAIR" id="AT1G25490">
    <property type="gene designation" value="RCN1"/>
</dbReference>
<dbReference type="eggNOG" id="KOG0211">
    <property type="taxonomic scope" value="Eukaryota"/>
</dbReference>
<dbReference type="HOGENOM" id="CLU_015533_2_1_1"/>
<dbReference type="InParanoid" id="Q38845"/>
<dbReference type="OMA" id="DIAEVRC"/>
<dbReference type="OrthoDB" id="340346at2759"/>
<dbReference type="PhylomeDB" id="Q38845"/>
<dbReference type="PRO" id="PR:Q38845"/>
<dbReference type="Proteomes" id="UP000006548">
    <property type="component" value="Chromosome 1"/>
</dbReference>
<dbReference type="ExpressionAtlas" id="Q38845">
    <property type="expression patterns" value="baseline and differential"/>
</dbReference>
<dbReference type="GO" id="GO:0005829">
    <property type="term" value="C:cytosol"/>
    <property type="evidence" value="ECO:0007669"/>
    <property type="project" value="UniProtKB-SubCell"/>
</dbReference>
<dbReference type="GO" id="GO:0005634">
    <property type="term" value="C:nucleus"/>
    <property type="evidence" value="ECO:0000314"/>
    <property type="project" value="TAIR"/>
</dbReference>
<dbReference type="GO" id="GO:0009505">
    <property type="term" value="C:plant-type cell wall"/>
    <property type="evidence" value="ECO:0007005"/>
    <property type="project" value="TAIR"/>
</dbReference>
<dbReference type="GO" id="GO:0005886">
    <property type="term" value="C:plasma membrane"/>
    <property type="evidence" value="ECO:0007005"/>
    <property type="project" value="TAIR"/>
</dbReference>
<dbReference type="GO" id="GO:0000159">
    <property type="term" value="C:protein phosphatase type 2A complex"/>
    <property type="evidence" value="ECO:0000304"/>
    <property type="project" value="TAIR"/>
</dbReference>
<dbReference type="GO" id="GO:1901149">
    <property type="term" value="F:salicylic acid binding"/>
    <property type="evidence" value="ECO:0007005"/>
    <property type="project" value="TAIR"/>
</dbReference>
<dbReference type="GO" id="GO:0009738">
    <property type="term" value="P:abscisic acid-activated signaling pathway"/>
    <property type="evidence" value="ECO:0000304"/>
    <property type="project" value="TAIR"/>
</dbReference>
<dbReference type="GO" id="GO:0009926">
    <property type="term" value="P:auxin polar transport"/>
    <property type="evidence" value="ECO:0000314"/>
    <property type="project" value="TAIR"/>
</dbReference>
<dbReference type="GO" id="GO:0009734">
    <property type="term" value="P:auxin-activated signaling pathway"/>
    <property type="evidence" value="ECO:0007669"/>
    <property type="project" value="UniProtKB-KW"/>
</dbReference>
<dbReference type="GO" id="GO:0006952">
    <property type="term" value="P:defense response"/>
    <property type="evidence" value="ECO:0007669"/>
    <property type="project" value="UniProtKB-KW"/>
</dbReference>
<dbReference type="GO" id="GO:0009873">
    <property type="term" value="P:ethylene-activated signaling pathway"/>
    <property type="evidence" value="ECO:0007669"/>
    <property type="project" value="UniProtKB-KW"/>
</dbReference>
<dbReference type="GO" id="GO:0009789">
    <property type="term" value="P:positive regulation of abscisic acid-activated signaling pathway"/>
    <property type="evidence" value="ECO:0000315"/>
    <property type="project" value="TAIR"/>
</dbReference>
<dbReference type="GO" id="GO:0010119">
    <property type="term" value="P:regulation of stomatal movement"/>
    <property type="evidence" value="ECO:0000315"/>
    <property type="project" value="TAIR"/>
</dbReference>
<dbReference type="GO" id="GO:0009723">
    <property type="term" value="P:response to ethylene"/>
    <property type="evidence" value="ECO:0000315"/>
    <property type="project" value="TAIR"/>
</dbReference>
<dbReference type="FunFam" id="1.25.10.10:FF:000062">
    <property type="entry name" value="Serine/threonine-protein phosphatase 2A regulatory subunit A alpha isoform"/>
    <property type="match status" value="1"/>
</dbReference>
<dbReference type="Gene3D" id="1.25.10.10">
    <property type="entry name" value="Leucine-rich Repeat Variant"/>
    <property type="match status" value="1"/>
</dbReference>
<dbReference type="InterPro" id="IPR011989">
    <property type="entry name" value="ARM-like"/>
</dbReference>
<dbReference type="InterPro" id="IPR016024">
    <property type="entry name" value="ARM-type_fold"/>
</dbReference>
<dbReference type="InterPro" id="IPR000357">
    <property type="entry name" value="HEAT"/>
</dbReference>
<dbReference type="InterPro" id="IPR021133">
    <property type="entry name" value="HEAT_type_2"/>
</dbReference>
<dbReference type="InterPro" id="IPR054573">
    <property type="entry name" value="PP2A/SF3B1-like_HEAT"/>
</dbReference>
<dbReference type="InterPro" id="IPR051023">
    <property type="entry name" value="PP2A_Regulatory_Subunit_A"/>
</dbReference>
<dbReference type="PANTHER" id="PTHR10648">
    <property type="entry name" value="SERINE/THREONINE-PROTEIN PHOSPHATASE PP2A 65 KDA REGULATORY SUBUNIT"/>
    <property type="match status" value="1"/>
</dbReference>
<dbReference type="PANTHER" id="PTHR10648:SF29">
    <property type="entry name" value="SERINE_THREONINE-PROTEIN PHOSPHATASE 2A 65 KDA REGULATORY SUBUNIT A ALPHA ISOFORM"/>
    <property type="match status" value="1"/>
</dbReference>
<dbReference type="Pfam" id="PF02985">
    <property type="entry name" value="HEAT"/>
    <property type="match status" value="2"/>
</dbReference>
<dbReference type="Pfam" id="PF22646">
    <property type="entry name" value="PPP2R1A-like_HEAT"/>
    <property type="match status" value="1"/>
</dbReference>
<dbReference type="SUPFAM" id="SSF48371">
    <property type="entry name" value="ARM repeat"/>
    <property type="match status" value="1"/>
</dbReference>
<dbReference type="PROSITE" id="PS50077">
    <property type="entry name" value="HEAT_REPEAT"/>
    <property type="match status" value="12"/>
</dbReference>
<organism>
    <name type="scientific">Arabidopsis thaliana</name>
    <name type="common">Mouse-ear cress</name>
    <dbReference type="NCBI Taxonomy" id="3702"/>
    <lineage>
        <taxon>Eukaryota</taxon>
        <taxon>Viridiplantae</taxon>
        <taxon>Streptophyta</taxon>
        <taxon>Embryophyta</taxon>
        <taxon>Tracheophyta</taxon>
        <taxon>Spermatophyta</taxon>
        <taxon>Magnoliopsida</taxon>
        <taxon>eudicotyledons</taxon>
        <taxon>Gunneridae</taxon>
        <taxon>Pentapetalae</taxon>
        <taxon>rosids</taxon>
        <taxon>malvids</taxon>
        <taxon>Brassicales</taxon>
        <taxon>Brassicaceae</taxon>
        <taxon>Camelineae</taxon>
        <taxon>Arabidopsis</taxon>
    </lineage>
</organism>